<dbReference type="EC" id="2.3.2.23" evidence="4"/>
<dbReference type="EMBL" id="DQ151896">
    <property type="protein sequence ID" value="AAZ57341.1"/>
    <property type="molecule type" value="mRNA"/>
</dbReference>
<dbReference type="EMBL" id="DQ151897">
    <property type="protein sequence ID" value="AAZ57342.1"/>
    <property type="molecule type" value="mRNA"/>
</dbReference>
<dbReference type="EMBL" id="AE014298">
    <property type="protein sequence ID" value="ABC67190.1"/>
    <property type="molecule type" value="Genomic_DNA"/>
</dbReference>
<dbReference type="EMBL" id="AE014298">
    <property type="protein sequence ID" value="AAF48756.2"/>
    <property type="molecule type" value="Genomic_DNA"/>
</dbReference>
<dbReference type="EMBL" id="BT031269">
    <property type="protein sequence ID" value="ABY20510.1"/>
    <property type="molecule type" value="mRNA"/>
</dbReference>
<dbReference type="RefSeq" id="NP_001033852.1">
    <property type="nucleotide sequence ID" value="NM_001038763.2"/>
</dbReference>
<dbReference type="RefSeq" id="NP_001285383.1">
    <property type="nucleotide sequence ID" value="NM_001298454.1"/>
</dbReference>
<dbReference type="RefSeq" id="NP_001285384.1">
    <property type="nucleotide sequence ID" value="NM_001298455.1"/>
</dbReference>
<dbReference type="RefSeq" id="NP_573237.2">
    <property type="nucleotide sequence ID" value="NM_133009.3"/>
</dbReference>
<dbReference type="SMR" id="Q9VX25"/>
<dbReference type="BioGRID" id="59074">
    <property type="interactions" value="9"/>
</dbReference>
<dbReference type="FunCoup" id="Q9VX25">
    <property type="interactions" value="1988"/>
</dbReference>
<dbReference type="IntAct" id="Q9VX25">
    <property type="interactions" value="5"/>
</dbReference>
<dbReference type="STRING" id="7227.FBpp0312005"/>
<dbReference type="PaxDb" id="7227-FBpp0099891"/>
<dbReference type="DNASU" id="32751"/>
<dbReference type="EnsemblMetazoa" id="FBtr0074476">
    <property type="protein sequence ID" value="FBpp0074250"/>
    <property type="gene ID" value="FBgn0030863"/>
</dbReference>
<dbReference type="EnsemblMetazoa" id="FBtr0100463">
    <property type="protein sequence ID" value="FBpp0099891"/>
    <property type="gene ID" value="FBgn0030863"/>
</dbReference>
<dbReference type="EnsemblMetazoa" id="FBtr0340633">
    <property type="protein sequence ID" value="FBpp0309497"/>
    <property type="gene ID" value="FBgn0030863"/>
</dbReference>
<dbReference type="EnsemblMetazoa" id="FBtr0346186">
    <property type="protein sequence ID" value="FBpp0312005"/>
    <property type="gene ID" value="FBgn0030863"/>
</dbReference>
<dbReference type="GeneID" id="32751"/>
<dbReference type="KEGG" id="dme:Dmel_CG8188"/>
<dbReference type="UCSC" id="CG8188-RA">
    <property type="organism name" value="d. melanogaster"/>
</dbReference>
<dbReference type="AGR" id="FB:FBgn0030863"/>
<dbReference type="FlyBase" id="FBgn0030863">
    <property type="gene designation" value="CG8188"/>
</dbReference>
<dbReference type="VEuPathDB" id="VectorBase:FBgn0030863"/>
<dbReference type="eggNOG" id="KOG0423">
    <property type="taxonomic scope" value="Eukaryota"/>
</dbReference>
<dbReference type="HOGENOM" id="CLU_030988_5_3_1"/>
<dbReference type="InParanoid" id="Q9VX25"/>
<dbReference type="OMA" id="QPAKCGA"/>
<dbReference type="OrthoDB" id="10069349at2759"/>
<dbReference type="PhylomeDB" id="Q9VX25"/>
<dbReference type="Reactome" id="R-DME-141430">
    <property type="pathway name" value="Inactivation of APC/C via direct inhibition of the APC/C complex"/>
</dbReference>
<dbReference type="Reactome" id="R-DME-174048">
    <property type="pathway name" value="APC/C:Cdc20 mediated degradation of Cyclin B"/>
</dbReference>
<dbReference type="Reactome" id="R-DME-174084">
    <property type="pathway name" value="Autodegradation of Cdh1 by Cdh1:APC/C"/>
</dbReference>
<dbReference type="Reactome" id="R-DME-174154">
    <property type="pathway name" value="APC/C:Cdc20 mediated degradation of Securin"/>
</dbReference>
<dbReference type="Reactome" id="R-DME-174178">
    <property type="pathway name" value="APC/C:Cdh1 mediated degradation of Cdc20 and other APC/C:Cdh1 targeted proteins in late mitosis/early G1"/>
</dbReference>
<dbReference type="Reactome" id="R-DME-174184">
    <property type="pathway name" value="Cdc20:Phospho-APC/C mediated degradation of Cyclin A"/>
</dbReference>
<dbReference type="Reactome" id="R-DME-176407">
    <property type="pathway name" value="Conversion from APC/C:Cdc20 to APC/C:Cdh1 in late anaphase"/>
</dbReference>
<dbReference type="Reactome" id="R-DME-176408">
    <property type="pathway name" value="Regulation of APC/C activators between G1/S and early anaphase"/>
</dbReference>
<dbReference type="Reactome" id="R-DME-176409">
    <property type="pathway name" value="APC/C:Cdc20 mediated degradation of mitotic proteins"/>
</dbReference>
<dbReference type="Reactome" id="R-DME-176412">
    <property type="pathway name" value="Phosphorylation of the APC/C"/>
</dbReference>
<dbReference type="Reactome" id="R-DME-179409">
    <property type="pathway name" value="APC-Cdc20 mediated degradation of Nek2A"/>
</dbReference>
<dbReference type="Reactome" id="R-DME-2467813">
    <property type="pathway name" value="Separation of Sister Chromatids"/>
</dbReference>
<dbReference type="Reactome" id="R-DME-2559582">
    <property type="pathway name" value="Senescence-Associated Secretory Phenotype (SASP)"/>
</dbReference>
<dbReference type="Reactome" id="R-DME-69017">
    <property type="pathway name" value="CDK-mediated phosphorylation and removal of Cdc6"/>
</dbReference>
<dbReference type="Reactome" id="R-DME-8866652">
    <property type="pathway name" value="Synthesis of active ubiquitin: roles of E1 and E2 enzymes"/>
</dbReference>
<dbReference type="Reactome" id="R-DME-983168">
    <property type="pathway name" value="Antigen processing: Ubiquitination &amp; Proteasome degradation"/>
</dbReference>
<dbReference type="UniPathway" id="UPA00143"/>
<dbReference type="BioGRID-ORCS" id="32751">
    <property type="hits" value="0 hits in 1 CRISPR screen"/>
</dbReference>
<dbReference type="ChiTaRS" id="CG8188">
    <property type="organism name" value="fly"/>
</dbReference>
<dbReference type="GenomeRNAi" id="32751"/>
<dbReference type="PRO" id="PR:Q9VX25"/>
<dbReference type="Proteomes" id="UP000000803">
    <property type="component" value="Chromosome X"/>
</dbReference>
<dbReference type="Bgee" id="FBgn0030863">
    <property type="expression patterns" value="Expressed in lamina monopolar neuron L4 (Drosophila) in insect head and 249 other cell types or tissues"/>
</dbReference>
<dbReference type="ExpressionAtlas" id="Q9VX25">
    <property type="expression patterns" value="baseline and differential"/>
</dbReference>
<dbReference type="GO" id="GO:0005634">
    <property type="term" value="C:nucleus"/>
    <property type="evidence" value="ECO:0000318"/>
    <property type="project" value="GO_Central"/>
</dbReference>
<dbReference type="GO" id="GO:0005524">
    <property type="term" value="F:ATP binding"/>
    <property type="evidence" value="ECO:0007669"/>
    <property type="project" value="UniProtKB-KW"/>
</dbReference>
<dbReference type="GO" id="GO:0061631">
    <property type="term" value="F:ubiquitin conjugating enzyme activity"/>
    <property type="evidence" value="ECO:0000318"/>
    <property type="project" value="GO_Central"/>
</dbReference>
<dbReference type="GO" id="GO:0004842">
    <property type="term" value="F:ubiquitin-protein transferase activity"/>
    <property type="evidence" value="ECO:0000250"/>
    <property type="project" value="FlyBase"/>
</dbReference>
<dbReference type="GO" id="GO:0031145">
    <property type="term" value="P:anaphase-promoting complex-dependent catabolic process"/>
    <property type="evidence" value="ECO:0000315"/>
    <property type="project" value="UniProtKB"/>
</dbReference>
<dbReference type="GO" id="GO:0051301">
    <property type="term" value="P:cell division"/>
    <property type="evidence" value="ECO:0007669"/>
    <property type="project" value="UniProtKB-KW"/>
</dbReference>
<dbReference type="GO" id="GO:0010458">
    <property type="term" value="P:exit from mitosis"/>
    <property type="evidence" value="ECO:0000315"/>
    <property type="project" value="UniProtKB"/>
</dbReference>
<dbReference type="GO" id="GO:0000209">
    <property type="term" value="P:protein polyubiquitination"/>
    <property type="evidence" value="ECO:0000318"/>
    <property type="project" value="GO_Central"/>
</dbReference>
<dbReference type="GO" id="GO:0016567">
    <property type="term" value="P:protein ubiquitination"/>
    <property type="evidence" value="ECO:0000250"/>
    <property type="project" value="FlyBase"/>
</dbReference>
<dbReference type="GO" id="GO:0006511">
    <property type="term" value="P:ubiquitin-dependent protein catabolic process"/>
    <property type="evidence" value="ECO:0000318"/>
    <property type="project" value="GO_Central"/>
</dbReference>
<dbReference type="CDD" id="cd23804">
    <property type="entry name" value="UBCc_UBE2S"/>
    <property type="match status" value="1"/>
</dbReference>
<dbReference type="FunFam" id="3.10.110.10:FF:000034">
    <property type="entry name" value="Ubiquitin-conjugating enzyme E2 S"/>
    <property type="match status" value="1"/>
</dbReference>
<dbReference type="Gene3D" id="3.10.110.10">
    <property type="entry name" value="Ubiquitin Conjugating Enzyme"/>
    <property type="match status" value="1"/>
</dbReference>
<dbReference type="InterPro" id="IPR050113">
    <property type="entry name" value="Ub_conjugating_enzyme"/>
</dbReference>
<dbReference type="InterPro" id="IPR000608">
    <property type="entry name" value="UBQ-conjugat_E2_core"/>
</dbReference>
<dbReference type="InterPro" id="IPR023313">
    <property type="entry name" value="UBQ-conjugating_AS"/>
</dbReference>
<dbReference type="InterPro" id="IPR016135">
    <property type="entry name" value="UBQ-conjugating_enzyme/RWD"/>
</dbReference>
<dbReference type="PANTHER" id="PTHR24067">
    <property type="entry name" value="UBIQUITIN-CONJUGATING ENZYME E2"/>
    <property type="match status" value="1"/>
</dbReference>
<dbReference type="Pfam" id="PF00179">
    <property type="entry name" value="UQ_con"/>
    <property type="match status" value="1"/>
</dbReference>
<dbReference type="SMART" id="SM00212">
    <property type="entry name" value="UBCc"/>
    <property type="match status" value="1"/>
</dbReference>
<dbReference type="SUPFAM" id="SSF54495">
    <property type="entry name" value="UBC-like"/>
    <property type="match status" value="1"/>
</dbReference>
<dbReference type="PROSITE" id="PS00183">
    <property type="entry name" value="UBC_1"/>
    <property type="match status" value="1"/>
</dbReference>
<dbReference type="PROSITE" id="PS50127">
    <property type="entry name" value="UBC_2"/>
    <property type="match status" value="1"/>
</dbReference>
<evidence type="ECO:0000255" key="1">
    <source>
        <dbReference type="PROSITE-ProRule" id="PRU00388"/>
    </source>
</evidence>
<evidence type="ECO:0000255" key="2">
    <source>
        <dbReference type="PROSITE-ProRule" id="PRU10133"/>
    </source>
</evidence>
<evidence type="ECO:0000256" key="3">
    <source>
        <dbReference type="SAM" id="MobiDB-lite"/>
    </source>
</evidence>
<evidence type="ECO:0000269" key="4">
    <source>
    </source>
</evidence>
<name>UBE2S_DROME</name>
<proteinExistence type="evidence at protein level"/>
<comment type="function">
    <text evidence="1 4">Catalyzes the covalent attachment of ubiquitin to other proteins. Acts as an essential factor of the anaphase promoting complex/cyclosome (APC/C), a cell cycle-regulated ubiquitin ligase that controls progression through mitosis. Acts by specifically elongating polyubiquitin chains initiated by the E2 enzyme vih/UbcH10 on APC/C substrates, enhancing the degradation of APC/C substrates by the proteasome and promoting mitotic exit.</text>
</comment>
<comment type="catalytic activity">
    <reaction evidence="1 2 4">
        <text>S-ubiquitinyl-[E1 ubiquitin-activating enzyme]-L-cysteine + [E2 ubiquitin-conjugating enzyme]-L-cysteine = [E1 ubiquitin-activating enzyme]-L-cysteine + S-ubiquitinyl-[E2 ubiquitin-conjugating enzyme]-L-cysteine.</text>
        <dbReference type="EC" id="2.3.2.23"/>
    </reaction>
</comment>
<comment type="pathway">
    <text evidence="1 4">Protein modification; protein ubiquitination.</text>
</comment>
<comment type="similarity">
    <text evidence="1">Belongs to the ubiquitin-conjugating enzyme family.</text>
</comment>
<gene>
    <name type="ORF">CG8188</name>
</gene>
<keyword id="KW-0067">ATP-binding</keyword>
<keyword id="KW-0131">Cell cycle</keyword>
<keyword id="KW-0132">Cell division</keyword>
<keyword id="KW-0547">Nucleotide-binding</keyword>
<keyword id="KW-1185">Reference proteome</keyword>
<keyword id="KW-0808">Transferase</keyword>
<keyword id="KW-0833">Ubl conjugation pathway</keyword>
<accession>Q9VX25</accession>
<organism>
    <name type="scientific">Drosophila melanogaster</name>
    <name type="common">Fruit fly</name>
    <dbReference type="NCBI Taxonomy" id="7227"/>
    <lineage>
        <taxon>Eukaryota</taxon>
        <taxon>Metazoa</taxon>
        <taxon>Ecdysozoa</taxon>
        <taxon>Arthropoda</taxon>
        <taxon>Hexapoda</taxon>
        <taxon>Insecta</taxon>
        <taxon>Pterygota</taxon>
        <taxon>Neoptera</taxon>
        <taxon>Endopterygota</taxon>
        <taxon>Diptera</taxon>
        <taxon>Brachycera</taxon>
        <taxon>Muscomorpha</taxon>
        <taxon>Ephydroidea</taxon>
        <taxon>Drosophilidae</taxon>
        <taxon>Drosophila</taxon>
        <taxon>Sophophora</taxon>
    </lineage>
</organism>
<reference key="1">
    <citation type="submission" date="2005-08" db="EMBL/GenBank/DDBJ databases">
        <title>Full length sequences of assorted Drosophila melanogaster cDNAs.</title>
        <authorList>
            <person name="Murphy T.D."/>
        </authorList>
    </citation>
    <scope>NUCLEOTIDE SEQUENCE [MRNA]</scope>
</reference>
<reference key="2">
    <citation type="journal article" date="2000" name="Science">
        <title>The genome sequence of Drosophila melanogaster.</title>
        <authorList>
            <person name="Adams M.D."/>
            <person name="Celniker S.E."/>
            <person name="Holt R.A."/>
            <person name="Evans C.A."/>
            <person name="Gocayne J.D."/>
            <person name="Amanatides P.G."/>
            <person name="Scherer S.E."/>
            <person name="Li P.W."/>
            <person name="Hoskins R.A."/>
            <person name="Galle R.F."/>
            <person name="George R.A."/>
            <person name="Lewis S.E."/>
            <person name="Richards S."/>
            <person name="Ashburner M."/>
            <person name="Henderson S.N."/>
            <person name="Sutton G.G."/>
            <person name="Wortman J.R."/>
            <person name="Yandell M.D."/>
            <person name="Zhang Q."/>
            <person name="Chen L.X."/>
            <person name="Brandon R.C."/>
            <person name="Rogers Y.-H.C."/>
            <person name="Blazej R.G."/>
            <person name="Champe M."/>
            <person name="Pfeiffer B.D."/>
            <person name="Wan K.H."/>
            <person name="Doyle C."/>
            <person name="Baxter E.G."/>
            <person name="Helt G."/>
            <person name="Nelson C.R."/>
            <person name="Miklos G.L.G."/>
            <person name="Abril J.F."/>
            <person name="Agbayani A."/>
            <person name="An H.-J."/>
            <person name="Andrews-Pfannkoch C."/>
            <person name="Baldwin D."/>
            <person name="Ballew R.M."/>
            <person name="Basu A."/>
            <person name="Baxendale J."/>
            <person name="Bayraktaroglu L."/>
            <person name="Beasley E.M."/>
            <person name="Beeson K.Y."/>
            <person name="Benos P.V."/>
            <person name="Berman B.P."/>
            <person name="Bhandari D."/>
            <person name="Bolshakov S."/>
            <person name="Borkova D."/>
            <person name="Botchan M.R."/>
            <person name="Bouck J."/>
            <person name="Brokstein P."/>
            <person name="Brottier P."/>
            <person name="Burtis K.C."/>
            <person name="Busam D.A."/>
            <person name="Butler H."/>
            <person name="Cadieu E."/>
            <person name="Center A."/>
            <person name="Chandra I."/>
            <person name="Cherry J.M."/>
            <person name="Cawley S."/>
            <person name="Dahlke C."/>
            <person name="Davenport L.B."/>
            <person name="Davies P."/>
            <person name="de Pablos B."/>
            <person name="Delcher A."/>
            <person name="Deng Z."/>
            <person name="Mays A.D."/>
            <person name="Dew I."/>
            <person name="Dietz S.M."/>
            <person name="Dodson K."/>
            <person name="Doup L.E."/>
            <person name="Downes M."/>
            <person name="Dugan-Rocha S."/>
            <person name="Dunkov B.C."/>
            <person name="Dunn P."/>
            <person name="Durbin K.J."/>
            <person name="Evangelista C.C."/>
            <person name="Ferraz C."/>
            <person name="Ferriera S."/>
            <person name="Fleischmann W."/>
            <person name="Fosler C."/>
            <person name="Gabrielian A.E."/>
            <person name="Garg N.S."/>
            <person name="Gelbart W.M."/>
            <person name="Glasser K."/>
            <person name="Glodek A."/>
            <person name="Gong F."/>
            <person name="Gorrell J.H."/>
            <person name="Gu Z."/>
            <person name="Guan P."/>
            <person name="Harris M."/>
            <person name="Harris N.L."/>
            <person name="Harvey D.A."/>
            <person name="Heiman T.J."/>
            <person name="Hernandez J.R."/>
            <person name="Houck J."/>
            <person name="Hostin D."/>
            <person name="Houston K.A."/>
            <person name="Howland T.J."/>
            <person name="Wei M.-H."/>
            <person name="Ibegwam C."/>
            <person name="Jalali M."/>
            <person name="Kalush F."/>
            <person name="Karpen G.H."/>
            <person name="Ke Z."/>
            <person name="Kennison J.A."/>
            <person name="Ketchum K.A."/>
            <person name="Kimmel B.E."/>
            <person name="Kodira C.D."/>
            <person name="Kraft C.L."/>
            <person name="Kravitz S."/>
            <person name="Kulp D."/>
            <person name="Lai Z."/>
            <person name="Lasko P."/>
            <person name="Lei Y."/>
            <person name="Levitsky A.A."/>
            <person name="Li J.H."/>
            <person name="Li Z."/>
            <person name="Liang Y."/>
            <person name="Lin X."/>
            <person name="Liu X."/>
            <person name="Mattei B."/>
            <person name="McIntosh T.C."/>
            <person name="McLeod M.P."/>
            <person name="McPherson D."/>
            <person name="Merkulov G."/>
            <person name="Milshina N.V."/>
            <person name="Mobarry C."/>
            <person name="Morris J."/>
            <person name="Moshrefi A."/>
            <person name="Mount S.M."/>
            <person name="Moy M."/>
            <person name="Murphy B."/>
            <person name="Murphy L."/>
            <person name="Muzny D.M."/>
            <person name="Nelson D.L."/>
            <person name="Nelson D.R."/>
            <person name="Nelson K.A."/>
            <person name="Nixon K."/>
            <person name="Nusskern D.R."/>
            <person name="Pacleb J.M."/>
            <person name="Palazzolo M."/>
            <person name="Pittman G.S."/>
            <person name="Pan S."/>
            <person name="Pollard J."/>
            <person name="Puri V."/>
            <person name="Reese M.G."/>
            <person name="Reinert K."/>
            <person name="Remington K."/>
            <person name="Saunders R.D.C."/>
            <person name="Scheeler F."/>
            <person name="Shen H."/>
            <person name="Shue B.C."/>
            <person name="Siden-Kiamos I."/>
            <person name="Simpson M."/>
            <person name="Skupski M.P."/>
            <person name="Smith T.J."/>
            <person name="Spier E."/>
            <person name="Spradling A.C."/>
            <person name="Stapleton M."/>
            <person name="Strong R."/>
            <person name="Sun E."/>
            <person name="Svirskas R."/>
            <person name="Tector C."/>
            <person name="Turner R."/>
            <person name="Venter E."/>
            <person name="Wang A.H."/>
            <person name="Wang X."/>
            <person name="Wang Z.-Y."/>
            <person name="Wassarman D.A."/>
            <person name="Weinstock G.M."/>
            <person name="Weissenbach J."/>
            <person name="Williams S.M."/>
            <person name="Woodage T."/>
            <person name="Worley K.C."/>
            <person name="Wu D."/>
            <person name="Yang S."/>
            <person name="Yao Q.A."/>
            <person name="Ye J."/>
            <person name="Yeh R.-F."/>
            <person name="Zaveri J.S."/>
            <person name="Zhan M."/>
            <person name="Zhang G."/>
            <person name="Zhao Q."/>
            <person name="Zheng L."/>
            <person name="Zheng X.H."/>
            <person name="Zhong F.N."/>
            <person name="Zhong W."/>
            <person name="Zhou X."/>
            <person name="Zhu S.C."/>
            <person name="Zhu X."/>
            <person name="Smith H.O."/>
            <person name="Gibbs R.A."/>
            <person name="Myers E.W."/>
            <person name="Rubin G.M."/>
            <person name="Venter J.C."/>
        </authorList>
    </citation>
    <scope>NUCLEOTIDE SEQUENCE [LARGE SCALE GENOMIC DNA]</scope>
    <source>
        <strain>Berkeley</strain>
    </source>
</reference>
<reference key="3">
    <citation type="journal article" date="2002" name="Genome Biol.">
        <title>Annotation of the Drosophila melanogaster euchromatic genome: a systematic review.</title>
        <authorList>
            <person name="Misra S."/>
            <person name="Crosby M.A."/>
            <person name="Mungall C.J."/>
            <person name="Matthews B.B."/>
            <person name="Campbell K.S."/>
            <person name="Hradecky P."/>
            <person name="Huang Y."/>
            <person name="Kaminker J.S."/>
            <person name="Millburn G.H."/>
            <person name="Prochnik S.E."/>
            <person name="Smith C.D."/>
            <person name="Tupy J.L."/>
            <person name="Whitfield E.J."/>
            <person name="Bayraktaroglu L."/>
            <person name="Berman B.P."/>
            <person name="Bettencourt B.R."/>
            <person name="Celniker S.E."/>
            <person name="de Grey A.D.N.J."/>
            <person name="Drysdale R.A."/>
            <person name="Harris N.L."/>
            <person name="Richter J."/>
            <person name="Russo S."/>
            <person name="Schroeder A.J."/>
            <person name="Shu S.Q."/>
            <person name="Stapleton M."/>
            <person name="Yamada C."/>
            <person name="Ashburner M."/>
            <person name="Gelbart W.M."/>
            <person name="Rubin G.M."/>
            <person name="Lewis S.E."/>
        </authorList>
    </citation>
    <scope>GENOME REANNOTATION</scope>
    <source>
        <strain>Berkeley</strain>
    </source>
</reference>
<reference key="4">
    <citation type="submission" date="2007-12" db="EMBL/GenBank/DDBJ databases">
        <authorList>
            <person name="Stapleton M."/>
            <person name="Carlson J.W."/>
            <person name="Frise E."/>
            <person name="Kapadia B."/>
            <person name="Park S."/>
            <person name="Wan K.H."/>
            <person name="Yu C."/>
            <person name="Celniker S.E."/>
        </authorList>
    </citation>
    <scope>NUCLEOTIDE SEQUENCE [LARGE SCALE MRNA]</scope>
    <source>
        <strain>Berkeley</strain>
        <tissue>Embryo</tissue>
    </source>
</reference>
<reference key="5">
    <citation type="journal article" date="2009" name="Proc. Natl. Acad. Sci. U.S.A.">
        <title>Identification of a physiological E2 module for the human anaphase-promoting complex.</title>
        <authorList>
            <person name="Williamson A."/>
            <person name="Wickliffe K.E."/>
            <person name="Mellone B.G."/>
            <person name="Song L."/>
            <person name="Karpen G.H."/>
            <person name="Rape M."/>
        </authorList>
    </citation>
    <scope>FUNCTION</scope>
    <scope>CATALYTIC ACTIVITY</scope>
    <scope>PATHWAY</scope>
</reference>
<protein>
    <recommendedName>
        <fullName>Ubiquitin-conjugating enzyme E2 S</fullName>
        <ecNumber evidence="4">2.3.2.23</ecNumber>
    </recommendedName>
    <alternativeName>
        <fullName>E2 ubiquitin-conjugating enzyme S</fullName>
    </alternativeName>
    <alternativeName>
        <fullName>Ubiquitin carrier protein S</fullName>
    </alternativeName>
    <alternativeName>
        <fullName>Ubiquitin-protein ligase S</fullName>
    </alternativeName>
</protein>
<feature type="chain" id="PRO_0000390440" description="Ubiquitin-conjugating enzyme E2 S">
    <location>
        <begin position="1"/>
        <end position="209"/>
    </location>
</feature>
<feature type="domain" description="UBC core" evidence="1">
    <location>
        <begin position="14"/>
        <end position="160"/>
    </location>
</feature>
<feature type="region of interest" description="Disordered" evidence="3">
    <location>
        <begin position="168"/>
        <end position="194"/>
    </location>
</feature>
<feature type="compositionally biased region" description="Basic and acidic residues" evidence="3">
    <location>
        <begin position="184"/>
        <end position="194"/>
    </location>
</feature>
<feature type="active site" description="Glycyl thioester intermediate" evidence="1 2">
    <location>
        <position position="98"/>
    </location>
</feature>
<sequence>MSSQYSNVENLSPQTIRQVMRELQEMETTPPEGIKVLINESDVTDIQALIDGPAGTPYAAGIFRVKLTLNKDFPLTPPKAYFLTKIFHPNVAANGEICVNTLKKDWKPDLGIKHILLTIKCLLIVPNPESALNEEAGKMLLERYDDYSQRARMMTEIHAQPAKCGVGAVGDAKDDGGPSTKKHAGLDKKLQDKKKEKLLKEKKRMLKRL</sequence>